<reference key="1">
    <citation type="journal article" date="2005" name="Genome Res.">
        <title>Comparative and functional genomic analyses of the pathogenicity of phytopathogen Xanthomonas campestris pv. campestris.</title>
        <authorList>
            <person name="Qian W."/>
            <person name="Jia Y."/>
            <person name="Ren S.-X."/>
            <person name="He Y.-Q."/>
            <person name="Feng J.-X."/>
            <person name="Lu L.-F."/>
            <person name="Sun Q."/>
            <person name="Ying G."/>
            <person name="Tang D.-J."/>
            <person name="Tang H."/>
            <person name="Wu W."/>
            <person name="Hao P."/>
            <person name="Wang L."/>
            <person name="Jiang B.-L."/>
            <person name="Zeng S."/>
            <person name="Gu W.-Y."/>
            <person name="Lu G."/>
            <person name="Rong L."/>
            <person name="Tian Y."/>
            <person name="Yao Z."/>
            <person name="Fu G."/>
            <person name="Chen B."/>
            <person name="Fang R."/>
            <person name="Qiang B."/>
            <person name="Chen Z."/>
            <person name="Zhao G.-P."/>
            <person name="Tang J.-L."/>
            <person name="He C."/>
        </authorList>
    </citation>
    <scope>NUCLEOTIDE SEQUENCE [LARGE SCALE GENOMIC DNA]</scope>
    <source>
        <strain>8004</strain>
    </source>
</reference>
<feature type="chain" id="PRO_1000020969" description="Protease HtpX">
    <location>
        <begin position="1"/>
        <end position="292"/>
    </location>
</feature>
<feature type="transmembrane region" description="Helical" evidence="1">
    <location>
        <begin position="5"/>
        <end position="25"/>
    </location>
</feature>
<feature type="transmembrane region" description="Helical" evidence="1">
    <location>
        <begin position="35"/>
        <end position="55"/>
    </location>
</feature>
<feature type="transmembrane region" description="Helical" evidence="1">
    <location>
        <begin position="155"/>
        <end position="175"/>
    </location>
</feature>
<feature type="transmembrane region" description="Helical" evidence="1">
    <location>
        <begin position="193"/>
        <end position="213"/>
    </location>
</feature>
<feature type="active site" evidence="1">
    <location>
        <position position="141"/>
    </location>
</feature>
<feature type="binding site" evidence="1">
    <location>
        <position position="140"/>
    </location>
    <ligand>
        <name>Zn(2+)</name>
        <dbReference type="ChEBI" id="CHEBI:29105"/>
        <note>catalytic</note>
    </ligand>
</feature>
<feature type="binding site" evidence="1">
    <location>
        <position position="144"/>
    </location>
    <ligand>
        <name>Zn(2+)</name>
        <dbReference type="ChEBI" id="CHEBI:29105"/>
        <note>catalytic</note>
    </ligand>
</feature>
<feature type="binding site" evidence="1">
    <location>
        <position position="218"/>
    </location>
    <ligand>
        <name>Zn(2+)</name>
        <dbReference type="ChEBI" id="CHEBI:29105"/>
        <note>catalytic</note>
    </ligand>
</feature>
<name>HTPX_XANC8</name>
<organism>
    <name type="scientific">Xanthomonas campestris pv. campestris (strain 8004)</name>
    <dbReference type="NCBI Taxonomy" id="314565"/>
    <lineage>
        <taxon>Bacteria</taxon>
        <taxon>Pseudomonadati</taxon>
        <taxon>Pseudomonadota</taxon>
        <taxon>Gammaproteobacteria</taxon>
        <taxon>Lysobacterales</taxon>
        <taxon>Lysobacteraceae</taxon>
        <taxon>Xanthomonas</taxon>
    </lineage>
</organism>
<protein>
    <recommendedName>
        <fullName evidence="1">Protease HtpX</fullName>
        <ecNumber evidence="1">3.4.24.-</ecNumber>
    </recommendedName>
    <alternativeName>
        <fullName evidence="1">Heat shock protein HtpX</fullName>
    </alternativeName>
</protein>
<proteinExistence type="inferred from homology"/>
<comment type="cofactor">
    <cofactor evidence="1">
        <name>Zn(2+)</name>
        <dbReference type="ChEBI" id="CHEBI:29105"/>
    </cofactor>
    <text evidence="1">Binds 1 zinc ion per subunit.</text>
</comment>
<comment type="subcellular location">
    <subcellularLocation>
        <location evidence="1">Cell inner membrane</location>
        <topology evidence="1">Multi-pass membrane protein</topology>
    </subcellularLocation>
</comment>
<comment type="similarity">
    <text evidence="1">Belongs to the peptidase M48B family.</text>
</comment>
<gene>
    <name evidence="1" type="primary">htpX</name>
    <name type="ordered locus">XC_1823</name>
</gene>
<evidence type="ECO:0000255" key="1">
    <source>
        <dbReference type="HAMAP-Rule" id="MF_00188"/>
    </source>
</evidence>
<accession>Q4UVN7</accession>
<dbReference type="EC" id="3.4.24.-" evidence="1"/>
<dbReference type="EMBL" id="CP000050">
    <property type="protein sequence ID" value="AAY48886.1"/>
    <property type="molecule type" value="Genomic_DNA"/>
</dbReference>
<dbReference type="RefSeq" id="WP_011037436.1">
    <property type="nucleotide sequence ID" value="NZ_CP155948.1"/>
</dbReference>
<dbReference type="SMR" id="Q4UVN7"/>
<dbReference type="MEROPS" id="M48.002"/>
<dbReference type="KEGG" id="xcb:XC_1823"/>
<dbReference type="HOGENOM" id="CLU_042266_1_0_6"/>
<dbReference type="Proteomes" id="UP000000420">
    <property type="component" value="Chromosome"/>
</dbReference>
<dbReference type="GO" id="GO:0005886">
    <property type="term" value="C:plasma membrane"/>
    <property type="evidence" value="ECO:0007669"/>
    <property type="project" value="UniProtKB-SubCell"/>
</dbReference>
<dbReference type="GO" id="GO:0004222">
    <property type="term" value="F:metalloendopeptidase activity"/>
    <property type="evidence" value="ECO:0007669"/>
    <property type="project" value="UniProtKB-UniRule"/>
</dbReference>
<dbReference type="GO" id="GO:0008270">
    <property type="term" value="F:zinc ion binding"/>
    <property type="evidence" value="ECO:0007669"/>
    <property type="project" value="UniProtKB-UniRule"/>
</dbReference>
<dbReference type="GO" id="GO:0006508">
    <property type="term" value="P:proteolysis"/>
    <property type="evidence" value="ECO:0007669"/>
    <property type="project" value="UniProtKB-KW"/>
</dbReference>
<dbReference type="CDD" id="cd07335">
    <property type="entry name" value="M48B_HtpX_like"/>
    <property type="match status" value="1"/>
</dbReference>
<dbReference type="Gene3D" id="3.30.2010.10">
    <property type="entry name" value="Metalloproteases ('zincins'), catalytic domain"/>
    <property type="match status" value="1"/>
</dbReference>
<dbReference type="HAMAP" id="MF_00188">
    <property type="entry name" value="Pept_M48_protease_HtpX"/>
    <property type="match status" value="1"/>
</dbReference>
<dbReference type="InterPro" id="IPR050083">
    <property type="entry name" value="HtpX_protease"/>
</dbReference>
<dbReference type="InterPro" id="IPR022919">
    <property type="entry name" value="Pept_M48_protease_HtpX"/>
</dbReference>
<dbReference type="InterPro" id="IPR001915">
    <property type="entry name" value="Peptidase_M48"/>
</dbReference>
<dbReference type="NCBIfam" id="NF003965">
    <property type="entry name" value="PRK05457.1"/>
    <property type="match status" value="1"/>
</dbReference>
<dbReference type="PANTHER" id="PTHR43221">
    <property type="entry name" value="PROTEASE HTPX"/>
    <property type="match status" value="1"/>
</dbReference>
<dbReference type="PANTHER" id="PTHR43221:SF1">
    <property type="entry name" value="PROTEASE HTPX"/>
    <property type="match status" value="1"/>
</dbReference>
<dbReference type="Pfam" id="PF01435">
    <property type="entry name" value="Peptidase_M48"/>
    <property type="match status" value="1"/>
</dbReference>
<sequence>MFNRVVLFLLTNFAVLILAGIVMSVLGVNPTQMSGLLVMAAIFGFGGSFISLLLSKFMAKRSTGAQVITEPRTQTERWLVDTVRRQAQAAGIGMPEVAIYDGPEINAFATGANRNNALVAVSTGLLQHMREDEAEAVLGHEIAHIANGDMVTMALLQGVLNTFVIVLARVVGGIIDSALSGNRDSGRGFAYYIIVFVLEMVFGLFATMIAMWFSRRREFRADAGGAQLAGRNKMIAALERLSLNHGQNTLPSQVQAFGISGGVGEGLRRLFLSHPPLTERIAALRASNGTAM</sequence>
<keyword id="KW-0997">Cell inner membrane</keyword>
<keyword id="KW-1003">Cell membrane</keyword>
<keyword id="KW-0378">Hydrolase</keyword>
<keyword id="KW-0472">Membrane</keyword>
<keyword id="KW-0479">Metal-binding</keyword>
<keyword id="KW-0482">Metalloprotease</keyword>
<keyword id="KW-0645">Protease</keyword>
<keyword id="KW-0346">Stress response</keyword>
<keyword id="KW-0812">Transmembrane</keyword>
<keyword id="KW-1133">Transmembrane helix</keyword>
<keyword id="KW-0862">Zinc</keyword>